<keyword id="KW-0687">Ribonucleoprotein</keyword>
<keyword id="KW-0689">Ribosomal protein</keyword>
<name>RL27_ACIBS</name>
<organism>
    <name type="scientific">Acinetobacter baumannii (strain SDF)</name>
    <dbReference type="NCBI Taxonomy" id="509170"/>
    <lineage>
        <taxon>Bacteria</taxon>
        <taxon>Pseudomonadati</taxon>
        <taxon>Pseudomonadota</taxon>
        <taxon>Gammaproteobacteria</taxon>
        <taxon>Moraxellales</taxon>
        <taxon>Moraxellaceae</taxon>
        <taxon>Acinetobacter</taxon>
        <taxon>Acinetobacter calcoaceticus/baumannii complex</taxon>
    </lineage>
</organism>
<feature type="chain" id="PRO_1000128678" description="Large ribosomal subunit protein bL27">
    <location>
        <begin position="1"/>
        <end position="85"/>
    </location>
</feature>
<feature type="region of interest" description="Disordered" evidence="2">
    <location>
        <begin position="1"/>
        <end position="20"/>
    </location>
</feature>
<evidence type="ECO:0000255" key="1">
    <source>
        <dbReference type="HAMAP-Rule" id="MF_00539"/>
    </source>
</evidence>
<evidence type="ECO:0000256" key="2">
    <source>
        <dbReference type="SAM" id="MobiDB-lite"/>
    </source>
</evidence>
<evidence type="ECO:0000305" key="3"/>
<comment type="similarity">
    <text evidence="1">Belongs to the bacterial ribosomal protein bL27 family.</text>
</comment>
<reference key="1">
    <citation type="journal article" date="2008" name="PLoS ONE">
        <title>Comparative analysis of Acinetobacters: three genomes for three lifestyles.</title>
        <authorList>
            <person name="Vallenet D."/>
            <person name="Nordmann P."/>
            <person name="Barbe V."/>
            <person name="Poirel L."/>
            <person name="Mangenot S."/>
            <person name="Bataille E."/>
            <person name="Dossat C."/>
            <person name="Gas S."/>
            <person name="Kreimeyer A."/>
            <person name="Lenoble P."/>
            <person name="Oztas S."/>
            <person name="Poulain J."/>
            <person name="Segurens B."/>
            <person name="Robert C."/>
            <person name="Abergel C."/>
            <person name="Claverie J.-M."/>
            <person name="Raoult D."/>
            <person name="Medigue C."/>
            <person name="Weissenbach J."/>
            <person name="Cruveiller S."/>
        </authorList>
    </citation>
    <scope>NUCLEOTIDE SEQUENCE [LARGE SCALE GENOMIC DNA]</scope>
    <source>
        <strain>SDF</strain>
    </source>
</reference>
<gene>
    <name evidence="1" type="primary">rpmA</name>
    <name type="ordered locus">ABSDF0744</name>
</gene>
<proteinExistence type="inferred from homology"/>
<sequence>MATKKAGGSTKNGRDSNPKMLGVKVYGGQTVTAGNIIVRQRGTEFHAGANVGMGRDHTLFATADGVVKFEVKGQFGRRYVKVETV</sequence>
<accession>B0VSH6</accession>
<protein>
    <recommendedName>
        <fullName evidence="1">Large ribosomal subunit protein bL27</fullName>
    </recommendedName>
    <alternativeName>
        <fullName evidence="3">50S ribosomal protein L27</fullName>
    </alternativeName>
</protein>
<dbReference type="EMBL" id="CU468230">
    <property type="protein sequence ID" value="CAP00116.1"/>
    <property type="molecule type" value="Genomic_DNA"/>
</dbReference>
<dbReference type="SMR" id="B0VSH6"/>
<dbReference type="KEGG" id="abm:ABSDF0744"/>
<dbReference type="HOGENOM" id="CLU_095424_4_1_6"/>
<dbReference type="Proteomes" id="UP000001741">
    <property type="component" value="Chromosome"/>
</dbReference>
<dbReference type="GO" id="GO:0022625">
    <property type="term" value="C:cytosolic large ribosomal subunit"/>
    <property type="evidence" value="ECO:0007669"/>
    <property type="project" value="TreeGrafter"/>
</dbReference>
<dbReference type="GO" id="GO:0003735">
    <property type="term" value="F:structural constituent of ribosome"/>
    <property type="evidence" value="ECO:0007669"/>
    <property type="project" value="InterPro"/>
</dbReference>
<dbReference type="GO" id="GO:0006412">
    <property type="term" value="P:translation"/>
    <property type="evidence" value="ECO:0007669"/>
    <property type="project" value="UniProtKB-UniRule"/>
</dbReference>
<dbReference type="FunFam" id="2.40.50.100:FF:000001">
    <property type="entry name" value="50S ribosomal protein L27"/>
    <property type="match status" value="1"/>
</dbReference>
<dbReference type="Gene3D" id="2.40.50.100">
    <property type="match status" value="1"/>
</dbReference>
<dbReference type="HAMAP" id="MF_00539">
    <property type="entry name" value="Ribosomal_bL27"/>
    <property type="match status" value="1"/>
</dbReference>
<dbReference type="InterPro" id="IPR001684">
    <property type="entry name" value="Ribosomal_bL27"/>
</dbReference>
<dbReference type="InterPro" id="IPR018261">
    <property type="entry name" value="Ribosomal_bL27_CS"/>
</dbReference>
<dbReference type="NCBIfam" id="TIGR00062">
    <property type="entry name" value="L27"/>
    <property type="match status" value="1"/>
</dbReference>
<dbReference type="PANTHER" id="PTHR15893:SF0">
    <property type="entry name" value="LARGE RIBOSOMAL SUBUNIT PROTEIN BL27M"/>
    <property type="match status" value="1"/>
</dbReference>
<dbReference type="PANTHER" id="PTHR15893">
    <property type="entry name" value="RIBOSOMAL PROTEIN L27"/>
    <property type="match status" value="1"/>
</dbReference>
<dbReference type="Pfam" id="PF01016">
    <property type="entry name" value="Ribosomal_L27"/>
    <property type="match status" value="1"/>
</dbReference>
<dbReference type="PRINTS" id="PR00063">
    <property type="entry name" value="RIBOSOMALL27"/>
</dbReference>
<dbReference type="SUPFAM" id="SSF110324">
    <property type="entry name" value="Ribosomal L27 protein-like"/>
    <property type="match status" value="1"/>
</dbReference>
<dbReference type="PROSITE" id="PS00831">
    <property type="entry name" value="RIBOSOMAL_L27"/>
    <property type="match status" value="1"/>
</dbReference>